<comment type="function">
    <text evidence="1">Catalyzes the dehydration of methylthioribulose-1-phosphate (MTRu-1-P) into 2,3-diketo-5-methylthiopentyl-1-phosphate (DK-MTP-1-P).</text>
</comment>
<comment type="catalytic activity">
    <reaction evidence="1">
        <text>5-(methylsulfanyl)-D-ribulose 1-phosphate = 5-methylsulfanyl-2,3-dioxopentyl phosphate + H2O</text>
        <dbReference type="Rhea" id="RHEA:15549"/>
        <dbReference type="ChEBI" id="CHEBI:15377"/>
        <dbReference type="ChEBI" id="CHEBI:58548"/>
        <dbReference type="ChEBI" id="CHEBI:58828"/>
        <dbReference type="EC" id="4.2.1.109"/>
    </reaction>
</comment>
<comment type="cofactor">
    <cofactor evidence="1">
        <name>Zn(2+)</name>
        <dbReference type="ChEBI" id="CHEBI:29105"/>
    </cofactor>
    <text evidence="1">Binds 1 zinc ion per subunit.</text>
</comment>
<comment type="pathway">
    <text evidence="1">Amino-acid biosynthesis; L-methionine biosynthesis via salvage pathway; L-methionine from S-methyl-5-thio-alpha-D-ribose 1-phosphate: step 2/6.</text>
</comment>
<comment type="subcellular location">
    <subcellularLocation>
        <location evidence="1">Cytoplasm</location>
    </subcellularLocation>
</comment>
<comment type="similarity">
    <text evidence="1">Belongs to the aldolase class II family. MtnB subfamily.</text>
</comment>
<dbReference type="EC" id="4.2.1.109" evidence="1"/>
<dbReference type="EMBL" id="CH445330">
    <property type="protein sequence ID" value="EAT88288.1"/>
    <property type="molecule type" value="Genomic_DNA"/>
</dbReference>
<dbReference type="RefSeq" id="XP_001794943.1">
    <property type="nucleotide sequence ID" value="XM_001794891.1"/>
</dbReference>
<dbReference type="SMR" id="Q0UUN6"/>
<dbReference type="FunCoup" id="Q0UUN6">
    <property type="interactions" value="234"/>
</dbReference>
<dbReference type="STRING" id="321614.Q0UUN6"/>
<dbReference type="EnsemblFungi" id="SNOT_04528">
    <property type="protein sequence ID" value="SNOT_04528"/>
    <property type="gene ID" value="SNOG_04528"/>
</dbReference>
<dbReference type="GeneID" id="5971811"/>
<dbReference type="KEGG" id="pno:SNOG_04528"/>
<dbReference type="VEuPathDB" id="FungiDB:JI435_045280"/>
<dbReference type="eggNOG" id="KOG2631">
    <property type="taxonomic scope" value="Eukaryota"/>
</dbReference>
<dbReference type="HOGENOM" id="CLU_006033_4_0_1"/>
<dbReference type="InParanoid" id="Q0UUN6"/>
<dbReference type="OMA" id="WFPGTSG"/>
<dbReference type="OrthoDB" id="191080at2759"/>
<dbReference type="UniPathway" id="UPA00904">
    <property type="reaction ID" value="UER00875"/>
</dbReference>
<dbReference type="Proteomes" id="UP000001055">
    <property type="component" value="Unassembled WGS sequence"/>
</dbReference>
<dbReference type="GO" id="GO:0005737">
    <property type="term" value="C:cytoplasm"/>
    <property type="evidence" value="ECO:0000318"/>
    <property type="project" value="GO_Central"/>
</dbReference>
<dbReference type="GO" id="GO:0046570">
    <property type="term" value="F:methylthioribulose 1-phosphate dehydratase activity"/>
    <property type="evidence" value="ECO:0000318"/>
    <property type="project" value="GO_Central"/>
</dbReference>
<dbReference type="GO" id="GO:0008270">
    <property type="term" value="F:zinc ion binding"/>
    <property type="evidence" value="ECO:0007669"/>
    <property type="project" value="UniProtKB-UniRule"/>
</dbReference>
<dbReference type="GO" id="GO:0019509">
    <property type="term" value="P:L-methionine salvage from methylthioadenosine"/>
    <property type="evidence" value="ECO:0000318"/>
    <property type="project" value="GO_Central"/>
</dbReference>
<dbReference type="FunFam" id="3.40.225.10:FF:000003">
    <property type="entry name" value="Methylthioribulose-1-phosphate dehydratase"/>
    <property type="match status" value="1"/>
</dbReference>
<dbReference type="Gene3D" id="3.40.225.10">
    <property type="entry name" value="Class II aldolase/adducin N-terminal domain"/>
    <property type="match status" value="1"/>
</dbReference>
<dbReference type="HAMAP" id="MF_03116">
    <property type="entry name" value="Salvage_MtnB_euk"/>
    <property type="match status" value="1"/>
</dbReference>
<dbReference type="InterPro" id="IPR001303">
    <property type="entry name" value="Aldolase_II/adducin_N"/>
</dbReference>
<dbReference type="InterPro" id="IPR036409">
    <property type="entry name" value="Aldolase_II/adducin_N_sf"/>
</dbReference>
<dbReference type="InterPro" id="IPR017714">
    <property type="entry name" value="MethylthioRu-1-P_deHdtase_MtnB"/>
</dbReference>
<dbReference type="InterPro" id="IPR027514">
    <property type="entry name" value="Salvage_MtnB_euk"/>
</dbReference>
<dbReference type="NCBIfam" id="TIGR03328">
    <property type="entry name" value="salvage_mtnB"/>
    <property type="match status" value="1"/>
</dbReference>
<dbReference type="PANTHER" id="PTHR10640">
    <property type="entry name" value="METHYLTHIORIBULOSE-1-PHOSPHATE DEHYDRATASE"/>
    <property type="match status" value="1"/>
</dbReference>
<dbReference type="PANTHER" id="PTHR10640:SF7">
    <property type="entry name" value="METHYLTHIORIBULOSE-1-PHOSPHATE DEHYDRATASE"/>
    <property type="match status" value="1"/>
</dbReference>
<dbReference type="Pfam" id="PF00596">
    <property type="entry name" value="Aldolase_II"/>
    <property type="match status" value="1"/>
</dbReference>
<dbReference type="SMART" id="SM01007">
    <property type="entry name" value="Aldolase_II"/>
    <property type="match status" value="1"/>
</dbReference>
<dbReference type="SUPFAM" id="SSF53639">
    <property type="entry name" value="AraD/HMP-PK domain-like"/>
    <property type="match status" value="1"/>
</dbReference>
<evidence type="ECO:0000255" key="1">
    <source>
        <dbReference type="HAMAP-Rule" id="MF_03116"/>
    </source>
</evidence>
<accession>Q0UUN6</accession>
<gene>
    <name evidence="1" type="primary">MDE1</name>
    <name type="ORF">SNOG_04528</name>
</gene>
<protein>
    <recommendedName>
        <fullName evidence="1">Methylthioribulose-1-phosphate dehydratase</fullName>
        <shortName evidence="1">MTRu-1-P dehydratase</shortName>
        <ecNumber evidence="1">4.2.1.109</ecNumber>
    </recommendedName>
</protein>
<name>MTNB_PHANO</name>
<keyword id="KW-0028">Amino-acid biosynthesis</keyword>
<keyword id="KW-0963">Cytoplasm</keyword>
<keyword id="KW-0456">Lyase</keyword>
<keyword id="KW-0479">Metal-binding</keyword>
<keyword id="KW-0486">Methionine biosynthesis</keyword>
<keyword id="KW-0862">Zinc</keyword>
<sequence length="233" mass="26323">MSTTAQDVEALVHSDDPNHPANHICTLCAKFYTLGWVTGTGGGTSIRHEDKIYIAPSGVQKELMKPTDMFVMDFESKEYLRRPQVLKPSACTPLFMAAFERGAGCCIHTHSQWAVLVTLLVERDLGTEACFEIEEIEQIKGIPKGRGKQGNLGYYDRLRIPIIENTAHEEDLRESLEAAMERWPDSYAILVRRHGIYVWGDNVHKAKTQCESIDYILQLAVEMKKLGLPWTKS</sequence>
<feature type="chain" id="PRO_0000393839" description="Methylthioribulose-1-phosphate dehydratase">
    <location>
        <begin position="1"/>
        <end position="233"/>
    </location>
</feature>
<feature type="active site" description="Proton donor/acceptor" evidence="1">
    <location>
        <position position="137"/>
    </location>
</feature>
<feature type="binding site" evidence="1">
    <location>
        <position position="91"/>
    </location>
    <ligand>
        <name>substrate</name>
    </ligand>
</feature>
<feature type="binding site" evidence="1">
    <location>
        <position position="108"/>
    </location>
    <ligand>
        <name>Zn(2+)</name>
        <dbReference type="ChEBI" id="CHEBI:29105"/>
    </ligand>
</feature>
<feature type="binding site" evidence="1">
    <location>
        <position position="110"/>
    </location>
    <ligand>
        <name>Zn(2+)</name>
        <dbReference type="ChEBI" id="CHEBI:29105"/>
    </ligand>
</feature>
<feature type="binding site" evidence="1">
    <location>
        <position position="194"/>
    </location>
    <ligand>
        <name>Zn(2+)</name>
        <dbReference type="ChEBI" id="CHEBI:29105"/>
    </ligand>
</feature>
<proteinExistence type="inferred from homology"/>
<organism>
    <name type="scientific">Phaeosphaeria nodorum (strain SN15 / ATCC MYA-4574 / FGSC 10173)</name>
    <name type="common">Glume blotch fungus</name>
    <name type="synonym">Parastagonospora nodorum</name>
    <dbReference type="NCBI Taxonomy" id="321614"/>
    <lineage>
        <taxon>Eukaryota</taxon>
        <taxon>Fungi</taxon>
        <taxon>Dikarya</taxon>
        <taxon>Ascomycota</taxon>
        <taxon>Pezizomycotina</taxon>
        <taxon>Dothideomycetes</taxon>
        <taxon>Pleosporomycetidae</taxon>
        <taxon>Pleosporales</taxon>
        <taxon>Pleosporineae</taxon>
        <taxon>Phaeosphaeriaceae</taxon>
        <taxon>Parastagonospora</taxon>
    </lineage>
</organism>
<reference key="1">
    <citation type="journal article" date="2007" name="Plant Cell">
        <title>Dothideomycete-plant interactions illuminated by genome sequencing and EST analysis of the wheat pathogen Stagonospora nodorum.</title>
        <authorList>
            <person name="Hane J.K."/>
            <person name="Lowe R.G.T."/>
            <person name="Solomon P.S."/>
            <person name="Tan K.-C."/>
            <person name="Schoch C.L."/>
            <person name="Spatafora J.W."/>
            <person name="Crous P.W."/>
            <person name="Kodira C.D."/>
            <person name="Birren B.W."/>
            <person name="Galagan J.E."/>
            <person name="Torriani S.F.F."/>
            <person name="McDonald B.A."/>
            <person name="Oliver R.P."/>
        </authorList>
    </citation>
    <scope>NUCLEOTIDE SEQUENCE [LARGE SCALE GENOMIC DNA]</scope>
    <source>
        <strain>SN15 / ATCC MYA-4574 / FGSC 10173</strain>
    </source>
</reference>